<feature type="chain" id="PRO_0000175899" description="Probable transcriptional regulatory protein gbs1691">
    <location>
        <begin position="1"/>
        <end position="238"/>
    </location>
</feature>
<reference key="1">
    <citation type="journal article" date="2002" name="Mol. Microbiol.">
        <title>Genome sequence of Streptococcus agalactiae, a pathogen causing invasive neonatal disease.</title>
        <authorList>
            <person name="Glaser P."/>
            <person name="Rusniok C."/>
            <person name="Buchrieser C."/>
            <person name="Chevalier F."/>
            <person name="Frangeul L."/>
            <person name="Msadek T."/>
            <person name="Zouine M."/>
            <person name="Couve E."/>
            <person name="Lalioui L."/>
            <person name="Poyart C."/>
            <person name="Trieu-Cuot P."/>
            <person name="Kunst F."/>
        </authorList>
    </citation>
    <scope>NUCLEOTIDE SEQUENCE [LARGE SCALE GENOMIC DNA]</scope>
    <source>
        <strain>NEM316</strain>
    </source>
</reference>
<accession>P67184</accession>
<accession>Q8DY48</accession>
<accession>Q8E3R5</accession>
<sequence>MGRKWANIVAKKTAKDGANSKVYAKFGVEIYVAAKQGEPDPESNSALKFVLDRAKQAQVPKHVIDKAIDKAKGNTDETFVEGRYEGFGPNGSMIIVDTLTSNVNRTAANVRTAYGKNGGNMGASGSVSYLFDKKGVIVFAGDDADTVFEQLLEADVDVDDVEAEEGTITVYTAPTDLHKGIQALRDNGVEEFQVTELEMIPQSEVVLEGDDLETFEKLIDALESDDDVQKVYHNVADF</sequence>
<keyword id="KW-0963">Cytoplasm</keyword>
<keyword id="KW-0238">DNA-binding</keyword>
<keyword id="KW-0804">Transcription</keyword>
<keyword id="KW-0805">Transcription regulation</keyword>
<gene>
    <name type="ordered locus">gbs1691</name>
</gene>
<proteinExistence type="inferred from homology"/>
<dbReference type="EMBL" id="AL766852">
    <property type="protein sequence ID" value="CAD47350.1"/>
    <property type="molecule type" value="Genomic_DNA"/>
</dbReference>
<dbReference type="RefSeq" id="WP_000532903.1">
    <property type="nucleotide sequence ID" value="NC_004368.1"/>
</dbReference>
<dbReference type="SMR" id="P67184"/>
<dbReference type="KEGG" id="san:gbs1691"/>
<dbReference type="eggNOG" id="COG0217">
    <property type="taxonomic scope" value="Bacteria"/>
</dbReference>
<dbReference type="HOGENOM" id="CLU_062974_2_0_9"/>
<dbReference type="Proteomes" id="UP000000823">
    <property type="component" value="Chromosome"/>
</dbReference>
<dbReference type="GO" id="GO:0005829">
    <property type="term" value="C:cytosol"/>
    <property type="evidence" value="ECO:0007669"/>
    <property type="project" value="TreeGrafter"/>
</dbReference>
<dbReference type="GO" id="GO:0003677">
    <property type="term" value="F:DNA binding"/>
    <property type="evidence" value="ECO:0007669"/>
    <property type="project" value="UniProtKB-UniRule"/>
</dbReference>
<dbReference type="GO" id="GO:0006355">
    <property type="term" value="P:regulation of DNA-templated transcription"/>
    <property type="evidence" value="ECO:0007669"/>
    <property type="project" value="UniProtKB-UniRule"/>
</dbReference>
<dbReference type="FunFam" id="1.10.10.200:FF:000003">
    <property type="entry name" value="Probable transcriptional regulatory protein YeeN"/>
    <property type="match status" value="1"/>
</dbReference>
<dbReference type="FunFam" id="3.30.70.980:FF:000004">
    <property type="entry name" value="Probable transcriptional regulatory protein YeeN"/>
    <property type="match status" value="1"/>
</dbReference>
<dbReference type="Gene3D" id="1.10.10.200">
    <property type="match status" value="1"/>
</dbReference>
<dbReference type="Gene3D" id="3.30.70.980">
    <property type="match status" value="2"/>
</dbReference>
<dbReference type="HAMAP" id="MF_00693">
    <property type="entry name" value="Transcrip_reg_TACO1"/>
    <property type="match status" value="1"/>
</dbReference>
<dbReference type="HAMAP" id="MF_00918">
    <property type="entry name" value="Transcrip_reg_TACO1_YeeN"/>
    <property type="match status" value="1"/>
</dbReference>
<dbReference type="InterPro" id="IPR017856">
    <property type="entry name" value="Integrase-like_N"/>
</dbReference>
<dbReference type="InterPro" id="IPR048300">
    <property type="entry name" value="TACO1_YebC-like_2nd/3rd_dom"/>
</dbReference>
<dbReference type="InterPro" id="IPR049083">
    <property type="entry name" value="TACO1_YebC_N"/>
</dbReference>
<dbReference type="InterPro" id="IPR002876">
    <property type="entry name" value="Transcrip_reg_TACO1-like"/>
</dbReference>
<dbReference type="InterPro" id="IPR026564">
    <property type="entry name" value="Transcrip_reg_TACO1-like_dom3"/>
</dbReference>
<dbReference type="InterPro" id="IPR026562">
    <property type="entry name" value="Transcrip_reg_TACO1_YeeN"/>
</dbReference>
<dbReference type="InterPro" id="IPR029072">
    <property type="entry name" value="YebC-like"/>
</dbReference>
<dbReference type="NCBIfam" id="NF001030">
    <property type="entry name" value="PRK00110.1"/>
    <property type="match status" value="1"/>
</dbReference>
<dbReference type="NCBIfam" id="NF009044">
    <property type="entry name" value="PRK12378.1"/>
    <property type="match status" value="1"/>
</dbReference>
<dbReference type="NCBIfam" id="TIGR01033">
    <property type="entry name" value="YebC/PmpR family DNA-binding transcriptional regulator"/>
    <property type="match status" value="1"/>
</dbReference>
<dbReference type="PANTHER" id="PTHR12532">
    <property type="entry name" value="TRANSLATIONAL ACTIVATOR OF CYTOCHROME C OXIDASE 1"/>
    <property type="match status" value="1"/>
</dbReference>
<dbReference type="PANTHER" id="PTHR12532:SF0">
    <property type="entry name" value="TRANSLATIONAL ACTIVATOR OF CYTOCHROME C OXIDASE 1"/>
    <property type="match status" value="1"/>
</dbReference>
<dbReference type="Pfam" id="PF20772">
    <property type="entry name" value="TACO1_YebC_N"/>
    <property type="match status" value="1"/>
</dbReference>
<dbReference type="Pfam" id="PF01709">
    <property type="entry name" value="Transcrip_reg"/>
    <property type="match status" value="1"/>
</dbReference>
<dbReference type="SUPFAM" id="SSF75625">
    <property type="entry name" value="YebC-like"/>
    <property type="match status" value="1"/>
</dbReference>
<organism>
    <name type="scientific">Streptococcus agalactiae serotype III (strain NEM316)</name>
    <dbReference type="NCBI Taxonomy" id="211110"/>
    <lineage>
        <taxon>Bacteria</taxon>
        <taxon>Bacillati</taxon>
        <taxon>Bacillota</taxon>
        <taxon>Bacilli</taxon>
        <taxon>Lactobacillales</taxon>
        <taxon>Streptococcaceae</taxon>
        <taxon>Streptococcus</taxon>
    </lineage>
</organism>
<protein>
    <recommendedName>
        <fullName evidence="1">Probable transcriptional regulatory protein gbs1691</fullName>
    </recommendedName>
</protein>
<name>Y1691_STRA3</name>
<comment type="subcellular location">
    <subcellularLocation>
        <location evidence="1">Cytoplasm</location>
    </subcellularLocation>
</comment>
<comment type="similarity">
    <text evidence="1">Belongs to the TACO1 family. YeeN subfamily.</text>
</comment>
<evidence type="ECO:0000255" key="1">
    <source>
        <dbReference type="HAMAP-Rule" id="MF_00918"/>
    </source>
</evidence>